<comment type="function">
    <text evidence="1">Self assemble to form an icosahedral capsid.</text>
</comment>
<comment type="subcellular location">
    <subcellularLocation>
        <location evidence="3">Virion</location>
    </subcellularLocation>
</comment>
<comment type="similarity">
    <text evidence="3">Belongs to the anelloviridae capsid protein family.</text>
</comment>
<name>CAPSD_TTVV6</name>
<accession>Q8V7J0</accession>
<organism>
    <name type="scientific">Torque teno virus (isolate Human/China/CT23F/2001)</name>
    <name type="common">TTV</name>
    <dbReference type="NCBI Taxonomy" id="687366"/>
    <lineage>
        <taxon>Viruses</taxon>
        <taxon>Viruses incertae sedis</taxon>
        <taxon>Anelloviridae</taxon>
        <taxon>Alphatorquevirus</taxon>
    </lineage>
</organism>
<protein>
    <recommendedName>
        <fullName>Capsid protein</fullName>
    </recommendedName>
</protein>
<gene>
    <name type="ORF">ORF1</name>
</gene>
<sequence>MAWWWGRWRRRWPRRRWRRRRRVWPRRSRFAVRRRRRGRYVSKRRRFRRRRRRRGRPRYRGRRKKRQTLVIRQWQPDVVRFCKINGWLPLIVCGSGSTQNNFIVHSEDITPRGAPYGGNLTHITWCLEAIYQEFLMHRNRWTRSNHDLDLMRYVGVRFKAYRHPTTDYIISYSKTSPFQVTELSYLSCHPLLMLLSKHHIVVKSLQTKPRGKPYVKFFCKPPKLMLNKWYFTKDFAKVPILMMWATACEPRNPWLGEGTLSPCIGFYALKPSIYTSLSNLPAKVQMFATGTQSDSLTTSSTGFYKTVHPSSITTTSKEWEYTYTGLMEKFFKQATNKPYNWENYGTPADYGSTYTTFSTHRSTRYETIKKEYQKVYPTLTTQTPTNFFLTQEFGFYSPYYLTPSKRDIDWHTPYTYTRYNPLADKGLGNMIWADWCSRDEAAYSPTQSKCMLKDLPLFILFYGYIDWVQKSIGSQTITRDMRLMVICPYTEPQLVDPQDKTKGFVLYGDTFANGNMPVLAPQIPISWFVRWYPNFAHQREVLERVVSCGPFMVRDQEKNSWDITLGYHFLFKWGGSPLPSQAIDDPSQKPTHALPEPGTLPRILQVSDPARLGPKTIFHQWDQRRGLFTKRSIKRMSEYSSDDENFSPGPSKRPALDTRPEGLAGEQRSAYAFLRALQDSQDSEESQEEAPLLEEQAHQKEKEELLLKQPQQQRQHQRVLKRGLRVLFGDVLKLRRGLHIDPLLT</sequence>
<proteinExistence type="inferred from homology"/>
<keyword id="KW-0167">Capsid protein</keyword>
<keyword id="KW-1185">Reference proteome</keyword>
<keyword id="KW-1140">T=1 icosahedral capsid protein</keyword>
<keyword id="KW-0946">Virion</keyword>
<reference key="1">
    <citation type="journal article" date="2002" name="Arch. Virol.">
        <title>Analysis of the entire genomes of thirteen TT virus variants classifiable into the fourth and fifth genetic groups, isolated from viremic infants.</title>
        <authorList>
            <person name="Peng Y.H."/>
            <person name="Nishizawa T."/>
            <person name="Takahashi M."/>
            <person name="Ishikawa T."/>
            <person name="Yoshikawa A."/>
            <person name="Okamoto H."/>
        </authorList>
    </citation>
    <scope>NUCLEOTIDE SEQUENCE [GENOMIC DNA]</scope>
</reference>
<reference key="2">
    <citation type="journal article" date="2007" name="Rev. Med. Virol.">
        <title>Torque teno virus (TTV): current status.</title>
        <authorList>
            <person name="Hino S."/>
            <person name="Miyata H."/>
        </authorList>
    </citation>
    <scope>REVIEW</scope>
</reference>
<dbReference type="EMBL" id="AB064595">
    <property type="protein sequence ID" value="BAB79310.1"/>
    <property type="molecule type" value="Genomic_DNA"/>
</dbReference>
<dbReference type="RefSeq" id="YP_003587845.1">
    <property type="nucleotide sequence ID" value="NC_014074.1"/>
</dbReference>
<dbReference type="SMR" id="Q8V7J0"/>
<dbReference type="KEGG" id="vg:9086596"/>
<dbReference type="OrthoDB" id="3295at10239"/>
<dbReference type="Proteomes" id="UP000007551">
    <property type="component" value="Genome"/>
</dbReference>
<dbReference type="GO" id="GO:0039615">
    <property type="term" value="C:T=1 icosahedral viral capsid"/>
    <property type="evidence" value="ECO:0007669"/>
    <property type="project" value="UniProtKB-KW"/>
</dbReference>
<dbReference type="InterPro" id="IPR004219">
    <property type="entry name" value="TTvirus_Unk"/>
</dbReference>
<dbReference type="Pfam" id="PF02956">
    <property type="entry name" value="TT_ORF1"/>
    <property type="match status" value="1"/>
</dbReference>
<organismHost>
    <name type="scientific">Homo sapiens</name>
    <name type="common">Human</name>
    <dbReference type="NCBI Taxonomy" id="9606"/>
</organismHost>
<feature type="chain" id="PRO_0000315331" description="Capsid protein">
    <location>
        <begin position="1"/>
        <end position="745"/>
    </location>
</feature>
<feature type="region of interest" description="Disordered" evidence="2">
    <location>
        <begin position="44"/>
        <end position="64"/>
    </location>
</feature>
<feature type="region of interest" description="Disordered" evidence="2">
    <location>
        <begin position="580"/>
        <end position="602"/>
    </location>
</feature>
<feature type="region of interest" description="Disordered" evidence="2">
    <location>
        <begin position="638"/>
        <end position="662"/>
    </location>
</feature>
<feature type="region of interest" description="Disordered" evidence="2">
    <location>
        <begin position="678"/>
        <end position="699"/>
    </location>
</feature>
<feature type="compositionally biased region" description="Acidic residues" evidence="2">
    <location>
        <begin position="681"/>
        <end position="692"/>
    </location>
</feature>
<evidence type="ECO:0000250" key="1"/>
<evidence type="ECO:0000256" key="2">
    <source>
        <dbReference type="SAM" id="MobiDB-lite"/>
    </source>
</evidence>
<evidence type="ECO:0000305" key="3"/>